<name>RIHB_ECO8A</name>
<gene>
    <name evidence="1" type="primary">rihB</name>
    <name type="ordered locus">ECIAI1_2242</name>
</gene>
<reference key="1">
    <citation type="journal article" date="2009" name="PLoS Genet.">
        <title>Organised genome dynamics in the Escherichia coli species results in highly diverse adaptive paths.</title>
        <authorList>
            <person name="Touchon M."/>
            <person name="Hoede C."/>
            <person name="Tenaillon O."/>
            <person name="Barbe V."/>
            <person name="Baeriswyl S."/>
            <person name="Bidet P."/>
            <person name="Bingen E."/>
            <person name="Bonacorsi S."/>
            <person name="Bouchier C."/>
            <person name="Bouvet O."/>
            <person name="Calteau A."/>
            <person name="Chiapello H."/>
            <person name="Clermont O."/>
            <person name="Cruveiller S."/>
            <person name="Danchin A."/>
            <person name="Diard M."/>
            <person name="Dossat C."/>
            <person name="Karoui M.E."/>
            <person name="Frapy E."/>
            <person name="Garry L."/>
            <person name="Ghigo J.M."/>
            <person name="Gilles A.M."/>
            <person name="Johnson J."/>
            <person name="Le Bouguenec C."/>
            <person name="Lescat M."/>
            <person name="Mangenot S."/>
            <person name="Martinez-Jehanne V."/>
            <person name="Matic I."/>
            <person name="Nassif X."/>
            <person name="Oztas S."/>
            <person name="Petit M.A."/>
            <person name="Pichon C."/>
            <person name="Rouy Z."/>
            <person name="Ruf C.S."/>
            <person name="Schneider D."/>
            <person name="Tourret J."/>
            <person name="Vacherie B."/>
            <person name="Vallenet D."/>
            <person name="Medigue C."/>
            <person name="Rocha E.P.C."/>
            <person name="Denamur E."/>
        </authorList>
    </citation>
    <scope>NUCLEOTIDE SEQUENCE [LARGE SCALE GENOMIC DNA]</scope>
    <source>
        <strain>IAI1</strain>
    </source>
</reference>
<comment type="function">
    <text evidence="1">Hydrolyzes cytidine or uridine to ribose and cytosine or uracil, respectively. Has a clear preference for cytidine over uridine. Strictly specific for ribonucleosides.</text>
</comment>
<comment type="catalytic activity">
    <reaction evidence="1">
        <text>a pyrimidine ribonucleoside + H2O = a pyrimidine nucleobase + D-ribose</text>
        <dbReference type="Rhea" id="RHEA:56816"/>
        <dbReference type="ChEBI" id="CHEBI:15377"/>
        <dbReference type="ChEBI" id="CHEBI:26432"/>
        <dbReference type="ChEBI" id="CHEBI:47013"/>
        <dbReference type="ChEBI" id="CHEBI:141014"/>
        <dbReference type="EC" id="3.2.2.8"/>
    </reaction>
</comment>
<comment type="cofactor">
    <cofactor evidence="1">
        <name>Ca(2+)</name>
        <dbReference type="ChEBI" id="CHEBI:29108"/>
    </cofactor>
    <text evidence="1">Binds 1 Ca(2+) ion per monomer.</text>
</comment>
<comment type="subunit">
    <text evidence="1">Homotetramer.</text>
</comment>
<comment type="similarity">
    <text evidence="1">Belongs to the IUNH family. RihB subfamily.</text>
</comment>
<protein>
    <recommendedName>
        <fullName evidence="1">Pyrimidine-specific ribonucleoside hydrolase RihB</fullName>
        <ecNumber evidence="1">3.2.2.8</ecNumber>
    </recommendedName>
    <alternativeName>
        <fullName evidence="1">Cytidine/uridine-specific hydrolase</fullName>
    </alternativeName>
</protein>
<evidence type="ECO:0000255" key="1">
    <source>
        <dbReference type="HAMAP-Rule" id="MF_01433"/>
    </source>
</evidence>
<feature type="chain" id="PRO_1000145830" description="Pyrimidine-specific ribonucleoside hydrolase RihB">
    <location>
        <begin position="1"/>
        <end position="313"/>
    </location>
</feature>
<feature type="active site" description="Proton acceptor" evidence="1">
    <location>
        <position position="11"/>
    </location>
</feature>
<feature type="binding site" evidence="1">
    <location>
        <position position="11"/>
    </location>
    <ligand>
        <name>Ca(2+)</name>
        <dbReference type="ChEBI" id="CHEBI:29108"/>
    </ligand>
</feature>
<feature type="binding site" evidence="1">
    <location>
        <position position="16"/>
    </location>
    <ligand>
        <name>Ca(2+)</name>
        <dbReference type="ChEBI" id="CHEBI:29108"/>
    </ligand>
</feature>
<feature type="binding site" evidence="1">
    <location>
        <position position="124"/>
    </location>
    <ligand>
        <name>Ca(2+)</name>
        <dbReference type="ChEBI" id="CHEBI:29108"/>
    </ligand>
</feature>
<feature type="binding site" evidence="1">
    <location>
        <position position="227"/>
    </location>
    <ligand>
        <name>substrate</name>
    </ligand>
</feature>
<feature type="binding site" evidence="1">
    <location>
        <position position="239"/>
    </location>
    <ligand>
        <name>substrate</name>
    </ligand>
</feature>
<feature type="binding site" evidence="1">
    <location>
        <position position="240"/>
    </location>
    <ligand>
        <name>Ca(2+)</name>
        <dbReference type="ChEBI" id="CHEBI:29108"/>
    </ligand>
</feature>
<proteinExistence type="inferred from homology"/>
<keyword id="KW-0106">Calcium</keyword>
<keyword id="KW-0326">Glycosidase</keyword>
<keyword id="KW-0378">Hydrolase</keyword>
<keyword id="KW-0479">Metal-binding</keyword>
<organism>
    <name type="scientific">Escherichia coli O8 (strain IAI1)</name>
    <dbReference type="NCBI Taxonomy" id="585034"/>
    <lineage>
        <taxon>Bacteria</taxon>
        <taxon>Pseudomonadati</taxon>
        <taxon>Pseudomonadota</taxon>
        <taxon>Gammaproteobacteria</taxon>
        <taxon>Enterobacterales</taxon>
        <taxon>Enterobacteriaceae</taxon>
        <taxon>Escherichia</taxon>
    </lineage>
</organism>
<dbReference type="EC" id="3.2.2.8" evidence="1"/>
<dbReference type="EMBL" id="CU928160">
    <property type="protein sequence ID" value="CAQ99087.1"/>
    <property type="molecule type" value="Genomic_DNA"/>
</dbReference>
<dbReference type="RefSeq" id="WP_000415446.1">
    <property type="nucleotide sequence ID" value="NC_011741.1"/>
</dbReference>
<dbReference type="SMR" id="B7M510"/>
<dbReference type="GeneID" id="75172290"/>
<dbReference type="KEGG" id="ecr:ECIAI1_2242"/>
<dbReference type="HOGENOM" id="CLU_036838_2_0_6"/>
<dbReference type="GO" id="GO:0005829">
    <property type="term" value="C:cytosol"/>
    <property type="evidence" value="ECO:0007669"/>
    <property type="project" value="TreeGrafter"/>
</dbReference>
<dbReference type="GO" id="GO:0005509">
    <property type="term" value="F:calcium ion binding"/>
    <property type="evidence" value="ECO:0007669"/>
    <property type="project" value="UniProtKB-UniRule"/>
</dbReference>
<dbReference type="GO" id="GO:0008477">
    <property type="term" value="F:purine nucleosidase activity"/>
    <property type="evidence" value="ECO:0007669"/>
    <property type="project" value="TreeGrafter"/>
</dbReference>
<dbReference type="GO" id="GO:0045437">
    <property type="term" value="F:uridine nucleosidase activity"/>
    <property type="evidence" value="ECO:0007669"/>
    <property type="project" value="UniProtKB-ARBA"/>
</dbReference>
<dbReference type="GO" id="GO:0006152">
    <property type="term" value="P:purine nucleoside catabolic process"/>
    <property type="evidence" value="ECO:0007669"/>
    <property type="project" value="TreeGrafter"/>
</dbReference>
<dbReference type="GO" id="GO:0006206">
    <property type="term" value="P:pyrimidine nucleobase metabolic process"/>
    <property type="evidence" value="ECO:0007669"/>
    <property type="project" value="UniProtKB-UniRule"/>
</dbReference>
<dbReference type="GO" id="GO:0046133">
    <property type="term" value="P:pyrimidine ribonucleoside catabolic process"/>
    <property type="evidence" value="ECO:0007669"/>
    <property type="project" value="InterPro"/>
</dbReference>
<dbReference type="CDD" id="cd02651">
    <property type="entry name" value="nuc_hydro_IU_UC_XIUA"/>
    <property type="match status" value="1"/>
</dbReference>
<dbReference type="FunFam" id="3.90.245.10:FF:000003">
    <property type="entry name" value="Pyrimidine-specific ribonucleoside hydrolase RihB"/>
    <property type="match status" value="1"/>
</dbReference>
<dbReference type="Gene3D" id="3.90.245.10">
    <property type="entry name" value="Ribonucleoside hydrolase-like"/>
    <property type="match status" value="1"/>
</dbReference>
<dbReference type="HAMAP" id="MF_01433">
    <property type="entry name" value="Pyrim_hydro_RihB"/>
    <property type="match status" value="1"/>
</dbReference>
<dbReference type="InterPro" id="IPR015910">
    <property type="entry name" value="I/U_nuclsd_hydro_CS"/>
</dbReference>
<dbReference type="InterPro" id="IPR001910">
    <property type="entry name" value="Inosine/uridine_hydrolase_dom"/>
</dbReference>
<dbReference type="InterPro" id="IPR023186">
    <property type="entry name" value="IUNH"/>
</dbReference>
<dbReference type="InterPro" id="IPR022977">
    <property type="entry name" value="Pyrim_hydro_RihB"/>
</dbReference>
<dbReference type="InterPro" id="IPR036452">
    <property type="entry name" value="Ribo_hydro-like"/>
</dbReference>
<dbReference type="NCBIfam" id="NF007417">
    <property type="entry name" value="PRK09955.1"/>
    <property type="match status" value="1"/>
</dbReference>
<dbReference type="PANTHER" id="PTHR12304">
    <property type="entry name" value="INOSINE-URIDINE PREFERRING NUCLEOSIDE HYDROLASE"/>
    <property type="match status" value="1"/>
</dbReference>
<dbReference type="PANTHER" id="PTHR12304:SF4">
    <property type="entry name" value="URIDINE NUCLEOSIDASE"/>
    <property type="match status" value="1"/>
</dbReference>
<dbReference type="Pfam" id="PF01156">
    <property type="entry name" value="IU_nuc_hydro"/>
    <property type="match status" value="1"/>
</dbReference>
<dbReference type="SUPFAM" id="SSF53590">
    <property type="entry name" value="Nucleoside hydrolase"/>
    <property type="match status" value="1"/>
</dbReference>
<dbReference type="PROSITE" id="PS01247">
    <property type="entry name" value="IUNH"/>
    <property type="match status" value="1"/>
</dbReference>
<accession>B7M510</accession>
<sequence length="313" mass="33766">MEKRKIILDCDPGHDDAIAMMMAAKHPAIDLLGITIVAGNQTLDKTLINGLNVCQKLEINVPVYAGMPQPIMRKQIVADNIHGETGLDGPVFEPLTRQAESTHAVKYIIDTLMASDGDITLVPVGPLSNIAVAMRMQPAILPKIREIVLMGGAYGTGNFTPSAEFNIFADPEAARVVFTSGVPLVMMGLDLTNQTVCTPDVIARMERAGGPAGELFSDIMNFTLKTQFENYGLAGGPVHDATCIGYLINPDGIKTQEMYVEVDVNSGPCYGRTVCDELGVLGKPANTKVGITIDTDWFWGLVEECVRGYIKTH</sequence>